<reference key="1">
    <citation type="journal article" date="2011" name="J. Bacteriol.">
        <title>Comparative genomics of 28 Salmonella enterica isolates: evidence for CRISPR-mediated adaptive sublineage evolution.</title>
        <authorList>
            <person name="Fricke W.F."/>
            <person name="Mammel M.K."/>
            <person name="McDermott P.F."/>
            <person name="Tartera C."/>
            <person name="White D.G."/>
            <person name="Leclerc J.E."/>
            <person name="Ravel J."/>
            <person name="Cebula T.A."/>
        </authorList>
    </citation>
    <scope>NUCLEOTIDE SEQUENCE [LARGE SCALE GENOMIC DNA]</scope>
    <source>
        <strain>SL254</strain>
    </source>
</reference>
<dbReference type="EC" id="5.4.2.11" evidence="1"/>
<dbReference type="EMBL" id="CP001113">
    <property type="protein sequence ID" value="ACF64318.1"/>
    <property type="molecule type" value="Genomic_DNA"/>
</dbReference>
<dbReference type="RefSeq" id="WP_000301554.1">
    <property type="nucleotide sequence ID" value="NZ_CCMR01000003.1"/>
</dbReference>
<dbReference type="SMR" id="B4SZH5"/>
<dbReference type="KEGG" id="see:SNSL254_A0836"/>
<dbReference type="HOGENOM" id="CLU_033323_1_1_6"/>
<dbReference type="UniPathway" id="UPA00109">
    <property type="reaction ID" value="UER00186"/>
</dbReference>
<dbReference type="Proteomes" id="UP000008824">
    <property type="component" value="Chromosome"/>
</dbReference>
<dbReference type="GO" id="GO:0004619">
    <property type="term" value="F:phosphoglycerate mutase activity"/>
    <property type="evidence" value="ECO:0007669"/>
    <property type="project" value="UniProtKB-EC"/>
</dbReference>
<dbReference type="GO" id="GO:0006094">
    <property type="term" value="P:gluconeogenesis"/>
    <property type="evidence" value="ECO:0007669"/>
    <property type="project" value="UniProtKB-UniRule"/>
</dbReference>
<dbReference type="GO" id="GO:0006096">
    <property type="term" value="P:glycolytic process"/>
    <property type="evidence" value="ECO:0007669"/>
    <property type="project" value="UniProtKB-UniRule"/>
</dbReference>
<dbReference type="CDD" id="cd07067">
    <property type="entry name" value="HP_PGM_like"/>
    <property type="match status" value="1"/>
</dbReference>
<dbReference type="FunFam" id="3.40.50.1240:FF:000003">
    <property type="entry name" value="2,3-bisphosphoglycerate-dependent phosphoglycerate mutase"/>
    <property type="match status" value="1"/>
</dbReference>
<dbReference type="Gene3D" id="3.40.50.1240">
    <property type="entry name" value="Phosphoglycerate mutase-like"/>
    <property type="match status" value="1"/>
</dbReference>
<dbReference type="HAMAP" id="MF_01039">
    <property type="entry name" value="PGAM_GpmA"/>
    <property type="match status" value="1"/>
</dbReference>
<dbReference type="InterPro" id="IPR013078">
    <property type="entry name" value="His_Pase_superF_clade-1"/>
</dbReference>
<dbReference type="InterPro" id="IPR029033">
    <property type="entry name" value="His_PPase_superfam"/>
</dbReference>
<dbReference type="InterPro" id="IPR001345">
    <property type="entry name" value="PG/BPGM_mutase_AS"/>
</dbReference>
<dbReference type="InterPro" id="IPR005952">
    <property type="entry name" value="Phosphogly_mut1"/>
</dbReference>
<dbReference type="NCBIfam" id="TIGR01258">
    <property type="entry name" value="pgm_1"/>
    <property type="match status" value="1"/>
</dbReference>
<dbReference type="NCBIfam" id="NF010713">
    <property type="entry name" value="PRK14115.1"/>
    <property type="match status" value="1"/>
</dbReference>
<dbReference type="PANTHER" id="PTHR11931">
    <property type="entry name" value="PHOSPHOGLYCERATE MUTASE"/>
    <property type="match status" value="1"/>
</dbReference>
<dbReference type="Pfam" id="PF00300">
    <property type="entry name" value="His_Phos_1"/>
    <property type="match status" value="1"/>
</dbReference>
<dbReference type="PIRSF" id="PIRSF000709">
    <property type="entry name" value="6PFK_2-Ptase"/>
    <property type="match status" value="1"/>
</dbReference>
<dbReference type="SMART" id="SM00855">
    <property type="entry name" value="PGAM"/>
    <property type="match status" value="1"/>
</dbReference>
<dbReference type="SUPFAM" id="SSF53254">
    <property type="entry name" value="Phosphoglycerate mutase-like"/>
    <property type="match status" value="1"/>
</dbReference>
<dbReference type="PROSITE" id="PS00175">
    <property type="entry name" value="PG_MUTASE"/>
    <property type="match status" value="1"/>
</dbReference>
<proteinExistence type="inferred from homology"/>
<gene>
    <name evidence="1" type="primary">gpmA</name>
    <name type="ordered locus">SNSL254_A0836</name>
</gene>
<organism>
    <name type="scientific">Salmonella newport (strain SL254)</name>
    <dbReference type="NCBI Taxonomy" id="423368"/>
    <lineage>
        <taxon>Bacteria</taxon>
        <taxon>Pseudomonadati</taxon>
        <taxon>Pseudomonadota</taxon>
        <taxon>Gammaproteobacteria</taxon>
        <taxon>Enterobacterales</taxon>
        <taxon>Enterobacteriaceae</taxon>
        <taxon>Salmonella</taxon>
    </lineage>
</organism>
<sequence>MAVTKLVLVRHGESQWNKENRFTGWYDVDLSEKGVSEAKAAGKLLKEEGFSFDFAYTSVLKRAIHTLWNVLDELDQAWLPVEKSWKLNERHYGALQGLNKAETAEKYGDEQVKQWRRGFAVTPPELTKDDERYPGHDPRYAKLSEKELPLTESLALTIDRVIPYWNDTILPRMKSGERVIIAAHGNSLRALVKYLDNMSEDEILELNIPTGVPLVYEFDENFKPIKHYYLGNADEIAAKAAAVANQGKAK</sequence>
<accession>B4SZH5</accession>
<keyword id="KW-0312">Gluconeogenesis</keyword>
<keyword id="KW-0324">Glycolysis</keyword>
<keyword id="KW-0413">Isomerase</keyword>
<feature type="chain" id="PRO_1000135975" description="2,3-bisphosphoglycerate-dependent phosphoglycerate mutase">
    <location>
        <begin position="1"/>
        <end position="250"/>
    </location>
</feature>
<feature type="active site" description="Tele-phosphohistidine intermediate" evidence="1">
    <location>
        <position position="11"/>
    </location>
</feature>
<feature type="active site" description="Proton donor/acceptor" evidence="1">
    <location>
        <position position="89"/>
    </location>
</feature>
<feature type="binding site" evidence="1">
    <location>
        <begin position="10"/>
        <end position="17"/>
    </location>
    <ligand>
        <name>substrate</name>
    </ligand>
</feature>
<feature type="binding site" evidence="1">
    <location>
        <begin position="23"/>
        <end position="24"/>
    </location>
    <ligand>
        <name>substrate</name>
    </ligand>
</feature>
<feature type="binding site" evidence="1">
    <location>
        <position position="62"/>
    </location>
    <ligand>
        <name>substrate</name>
    </ligand>
</feature>
<feature type="binding site" evidence="1">
    <location>
        <begin position="89"/>
        <end position="92"/>
    </location>
    <ligand>
        <name>substrate</name>
    </ligand>
</feature>
<feature type="binding site" evidence="1">
    <location>
        <position position="100"/>
    </location>
    <ligand>
        <name>substrate</name>
    </ligand>
</feature>
<feature type="binding site" evidence="1">
    <location>
        <begin position="116"/>
        <end position="117"/>
    </location>
    <ligand>
        <name>substrate</name>
    </ligand>
</feature>
<feature type="binding site" evidence="1">
    <location>
        <begin position="185"/>
        <end position="186"/>
    </location>
    <ligand>
        <name>substrate</name>
    </ligand>
</feature>
<feature type="site" description="Transition state stabilizer" evidence="1">
    <location>
        <position position="184"/>
    </location>
</feature>
<evidence type="ECO:0000255" key="1">
    <source>
        <dbReference type="HAMAP-Rule" id="MF_01039"/>
    </source>
</evidence>
<protein>
    <recommendedName>
        <fullName evidence="1">2,3-bisphosphoglycerate-dependent phosphoglycerate mutase</fullName>
        <shortName evidence="1">BPG-dependent PGAM</shortName>
        <shortName evidence="1">PGAM</shortName>
        <shortName evidence="1">Phosphoglyceromutase</shortName>
        <shortName evidence="1">dPGM</shortName>
        <ecNumber evidence="1">5.4.2.11</ecNumber>
    </recommendedName>
</protein>
<name>GPMA_SALNS</name>
<comment type="function">
    <text evidence="1">Catalyzes the interconversion of 2-phosphoglycerate and 3-phosphoglycerate.</text>
</comment>
<comment type="catalytic activity">
    <reaction evidence="1">
        <text>(2R)-2-phosphoglycerate = (2R)-3-phosphoglycerate</text>
        <dbReference type="Rhea" id="RHEA:15901"/>
        <dbReference type="ChEBI" id="CHEBI:58272"/>
        <dbReference type="ChEBI" id="CHEBI:58289"/>
        <dbReference type="EC" id="5.4.2.11"/>
    </reaction>
</comment>
<comment type="pathway">
    <text evidence="1">Carbohydrate degradation; glycolysis; pyruvate from D-glyceraldehyde 3-phosphate: step 3/5.</text>
</comment>
<comment type="subunit">
    <text evidence="1">Homodimer.</text>
</comment>
<comment type="similarity">
    <text evidence="1">Belongs to the phosphoglycerate mutase family. BPG-dependent PGAM subfamily.</text>
</comment>